<feature type="chain" id="PRO_1000062340" description="NADPH-dependent 7-cyano-7-deazaguanine reductase">
    <location>
        <begin position="1"/>
        <end position="282"/>
    </location>
</feature>
<feature type="active site" description="Thioimide intermediate" evidence="1">
    <location>
        <position position="190"/>
    </location>
</feature>
<feature type="active site" description="Proton donor" evidence="1">
    <location>
        <position position="197"/>
    </location>
</feature>
<feature type="binding site" evidence="1">
    <location>
        <begin position="88"/>
        <end position="90"/>
    </location>
    <ligand>
        <name>substrate</name>
    </ligand>
</feature>
<feature type="binding site" evidence="1">
    <location>
        <begin position="90"/>
        <end position="91"/>
    </location>
    <ligand>
        <name>NADPH</name>
        <dbReference type="ChEBI" id="CHEBI:57783"/>
    </ligand>
</feature>
<feature type="binding site" evidence="1">
    <location>
        <begin position="229"/>
        <end position="230"/>
    </location>
    <ligand>
        <name>substrate</name>
    </ligand>
</feature>
<feature type="binding site" evidence="1">
    <location>
        <begin position="258"/>
        <end position="259"/>
    </location>
    <ligand>
        <name>NADPH</name>
        <dbReference type="ChEBI" id="CHEBI:57783"/>
    </ligand>
</feature>
<evidence type="ECO:0000255" key="1">
    <source>
        <dbReference type="HAMAP-Rule" id="MF_00817"/>
    </source>
</evidence>
<name>QUEF_ECOK1</name>
<accession>A1AEY1</accession>
<sequence length="282" mass="32557">MSSYANHQALAGLTLGKSTDYRDTYDASLLQGVPRSLNRDPLGLKADNLPFHGTDIWTLYELSWLNAKGLPQVAVGHVELDYTSVNLIESKSFKLYLNSFNQTRFNNWDEVRQTLERDLSTCAQGKVSVALYRLDELEGQPIGHFNGTCIDDQDITIDNYEFTTDYLENATSGEKVVEETLVSHLLKSNCLITHQPDWGSIQIQYRGRQIDREKLLRYLVSFRHHNEFHEQCVERIFNDLLRFCQPEKLSVYARYTRRGGLDINPWRSNSDFVPSTTRLVRQ</sequence>
<comment type="function">
    <text evidence="1">Catalyzes the NADPH-dependent reduction of 7-cyano-7-deazaguanine (preQ0) to 7-aminomethyl-7-deazaguanine (preQ1).</text>
</comment>
<comment type="catalytic activity">
    <reaction evidence="1">
        <text>7-aminomethyl-7-carbaguanine + 2 NADP(+) = 7-cyano-7-deazaguanine + 2 NADPH + 3 H(+)</text>
        <dbReference type="Rhea" id="RHEA:13409"/>
        <dbReference type="ChEBI" id="CHEBI:15378"/>
        <dbReference type="ChEBI" id="CHEBI:45075"/>
        <dbReference type="ChEBI" id="CHEBI:57783"/>
        <dbReference type="ChEBI" id="CHEBI:58349"/>
        <dbReference type="ChEBI" id="CHEBI:58703"/>
        <dbReference type="EC" id="1.7.1.13"/>
    </reaction>
</comment>
<comment type="pathway">
    <text evidence="1">tRNA modification; tRNA-queuosine biosynthesis.</text>
</comment>
<comment type="subunit">
    <text evidence="1">Homodimer.</text>
</comment>
<comment type="subcellular location">
    <subcellularLocation>
        <location evidence="1">Cytoplasm</location>
    </subcellularLocation>
</comment>
<comment type="similarity">
    <text evidence="1">Belongs to the GTP cyclohydrolase I family. QueF type 2 subfamily.</text>
</comment>
<gene>
    <name evidence="1" type="primary">queF</name>
    <name type="ordered locus">Ecok1_27270</name>
    <name type="ORF">APECO1_3737</name>
</gene>
<reference key="1">
    <citation type="journal article" date="2007" name="J. Bacteriol.">
        <title>The genome sequence of avian pathogenic Escherichia coli strain O1:K1:H7 shares strong similarities with human extraintestinal pathogenic E. coli genomes.</title>
        <authorList>
            <person name="Johnson T.J."/>
            <person name="Kariyawasam S."/>
            <person name="Wannemuehler Y."/>
            <person name="Mangiamele P."/>
            <person name="Johnson S.J."/>
            <person name="Doetkott C."/>
            <person name="Skyberg J.A."/>
            <person name="Lynne A.M."/>
            <person name="Johnson J.R."/>
            <person name="Nolan L.K."/>
        </authorList>
    </citation>
    <scope>NUCLEOTIDE SEQUENCE [LARGE SCALE GENOMIC DNA]</scope>
</reference>
<proteinExistence type="inferred from homology"/>
<keyword id="KW-0963">Cytoplasm</keyword>
<keyword id="KW-0521">NADP</keyword>
<keyword id="KW-0560">Oxidoreductase</keyword>
<keyword id="KW-0671">Queuosine biosynthesis</keyword>
<keyword id="KW-1185">Reference proteome</keyword>
<dbReference type="EC" id="1.7.1.13" evidence="1"/>
<dbReference type="EMBL" id="CP000468">
    <property type="protein sequence ID" value="ABJ02221.1"/>
    <property type="molecule type" value="Genomic_DNA"/>
</dbReference>
<dbReference type="RefSeq" id="WP_000100430.1">
    <property type="nucleotide sequence ID" value="NZ_CADILS010000024.1"/>
</dbReference>
<dbReference type="SMR" id="A1AEY1"/>
<dbReference type="GeneID" id="75203815"/>
<dbReference type="KEGG" id="ecv:APECO1_3737"/>
<dbReference type="HOGENOM" id="CLU_054738_0_0_6"/>
<dbReference type="UniPathway" id="UPA00392"/>
<dbReference type="Proteomes" id="UP000008216">
    <property type="component" value="Chromosome"/>
</dbReference>
<dbReference type="GO" id="GO:0005737">
    <property type="term" value="C:cytoplasm"/>
    <property type="evidence" value="ECO:0007669"/>
    <property type="project" value="UniProtKB-SubCell"/>
</dbReference>
<dbReference type="GO" id="GO:0033739">
    <property type="term" value="F:preQ1 synthase activity"/>
    <property type="evidence" value="ECO:0007669"/>
    <property type="project" value="UniProtKB-UniRule"/>
</dbReference>
<dbReference type="GO" id="GO:0008616">
    <property type="term" value="P:queuosine biosynthetic process"/>
    <property type="evidence" value="ECO:0007669"/>
    <property type="project" value="UniProtKB-UniRule"/>
</dbReference>
<dbReference type="GO" id="GO:0006400">
    <property type="term" value="P:tRNA modification"/>
    <property type="evidence" value="ECO:0007669"/>
    <property type="project" value="UniProtKB-UniRule"/>
</dbReference>
<dbReference type="FunFam" id="3.30.1130.10:FF:000004">
    <property type="entry name" value="NADPH-dependent 7-cyano-7-deazaguanine reductase"/>
    <property type="match status" value="1"/>
</dbReference>
<dbReference type="FunFam" id="3.30.1130.10:FF:000006">
    <property type="entry name" value="NADPH-dependent 7-cyano-7-deazaguanine reductase"/>
    <property type="match status" value="1"/>
</dbReference>
<dbReference type="Gene3D" id="3.30.1130.10">
    <property type="match status" value="2"/>
</dbReference>
<dbReference type="HAMAP" id="MF_00817">
    <property type="entry name" value="QueF_type2"/>
    <property type="match status" value="1"/>
</dbReference>
<dbReference type="InterPro" id="IPR043133">
    <property type="entry name" value="GTP-CH-I_C/QueF"/>
</dbReference>
<dbReference type="InterPro" id="IPR050084">
    <property type="entry name" value="NADPH_dep_7-cyano-7-deazaG_red"/>
</dbReference>
<dbReference type="InterPro" id="IPR029500">
    <property type="entry name" value="QueF"/>
</dbReference>
<dbReference type="InterPro" id="IPR029139">
    <property type="entry name" value="QueF_N"/>
</dbReference>
<dbReference type="InterPro" id="IPR016428">
    <property type="entry name" value="QueF_type2"/>
</dbReference>
<dbReference type="NCBIfam" id="TIGR03138">
    <property type="entry name" value="QueF"/>
    <property type="match status" value="1"/>
</dbReference>
<dbReference type="PANTHER" id="PTHR34354">
    <property type="entry name" value="NADPH-DEPENDENT 7-CYANO-7-DEAZAGUANINE REDUCTASE"/>
    <property type="match status" value="1"/>
</dbReference>
<dbReference type="PANTHER" id="PTHR34354:SF1">
    <property type="entry name" value="NADPH-DEPENDENT 7-CYANO-7-DEAZAGUANINE REDUCTASE"/>
    <property type="match status" value="1"/>
</dbReference>
<dbReference type="Pfam" id="PF14489">
    <property type="entry name" value="QueF"/>
    <property type="match status" value="1"/>
</dbReference>
<dbReference type="Pfam" id="PF14819">
    <property type="entry name" value="QueF_N"/>
    <property type="match status" value="1"/>
</dbReference>
<dbReference type="PIRSF" id="PIRSF004750">
    <property type="entry name" value="Nitrile_oxidored_YqcD_prd"/>
    <property type="match status" value="1"/>
</dbReference>
<dbReference type="SUPFAM" id="SSF55620">
    <property type="entry name" value="Tetrahydrobiopterin biosynthesis enzymes-like"/>
    <property type="match status" value="1"/>
</dbReference>
<protein>
    <recommendedName>
        <fullName evidence="1">NADPH-dependent 7-cyano-7-deazaguanine reductase</fullName>
        <ecNumber evidence="1">1.7.1.13</ecNumber>
    </recommendedName>
    <alternativeName>
        <fullName evidence="1">7-cyano-7-carbaguanine reductase</fullName>
    </alternativeName>
    <alternativeName>
        <fullName evidence="1">NADPH-dependent nitrile oxidoreductase</fullName>
    </alternativeName>
    <alternativeName>
        <fullName evidence="1">PreQ(0) reductase</fullName>
    </alternativeName>
</protein>
<organism>
    <name type="scientific">Escherichia coli O1:K1 / APEC</name>
    <dbReference type="NCBI Taxonomy" id="405955"/>
    <lineage>
        <taxon>Bacteria</taxon>
        <taxon>Pseudomonadati</taxon>
        <taxon>Pseudomonadota</taxon>
        <taxon>Gammaproteobacteria</taxon>
        <taxon>Enterobacterales</taxon>
        <taxon>Enterobacteriaceae</taxon>
        <taxon>Escherichia</taxon>
    </lineage>
</organism>